<evidence type="ECO:0000255" key="1">
    <source>
        <dbReference type="HAMAP-Rule" id="MF_00283"/>
    </source>
</evidence>
<keyword id="KW-0030">Aminoacyl-tRNA synthetase</keyword>
<keyword id="KW-0067">ATP-binding</keyword>
<keyword id="KW-0963">Cytoplasm</keyword>
<keyword id="KW-0436">Ligase</keyword>
<keyword id="KW-0460">Magnesium</keyword>
<keyword id="KW-0479">Metal-binding</keyword>
<keyword id="KW-0547">Nucleotide-binding</keyword>
<keyword id="KW-0648">Protein biosynthesis</keyword>
<keyword id="KW-1185">Reference proteome</keyword>
<keyword id="KW-0694">RNA-binding</keyword>
<keyword id="KW-0820">tRNA-binding</keyword>
<feature type="chain" id="PRO_0000126887" description="Phenylalanine--tRNA ligase beta subunit">
    <location>
        <begin position="1"/>
        <end position="798"/>
    </location>
</feature>
<feature type="domain" description="tRNA-binding" evidence="1">
    <location>
        <begin position="39"/>
        <end position="148"/>
    </location>
</feature>
<feature type="domain" description="B5" evidence="1">
    <location>
        <begin position="401"/>
        <end position="477"/>
    </location>
</feature>
<feature type="domain" description="FDX-ACB" evidence="1">
    <location>
        <begin position="705"/>
        <end position="797"/>
    </location>
</feature>
<feature type="binding site" evidence="1">
    <location>
        <position position="455"/>
    </location>
    <ligand>
        <name>Mg(2+)</name>
        <dbReference type="ChEBI" id="CHEBI:18420"/>
        <note>shared with alpha subunit</note>
    </ligand>
</feature>
<feature type="binding site" evidence="1">
    <location>
        <position position="461"/>
    </location>
    <ligand>
        <name>Mg(2+)</name>
        <dbReference type="ChEBI" id="CHEBI:18420"/>
        <note>shared with alpha subunit</note>
    </ligand>
</feature>
<feature type="binding site" evidence="1">
    <location>
        <position position="464"/>
    </location>
    <ligand>
        <name>Mg(2+)</name>
        <dbReference type="ChEBI" id="CHEBI:18420"/>
        <note>shared with alpha subunit</note>
    </ligand>
</feature>
<feature type="binding site" evidence="1">
    <location>
        <position position="465"/>
    </location>
    <ligand>
        <name>Mg(2+)</name>
        <dbReference type="ChEBI" id="CHEBI:18420"/>
        <note>shared with alpha subunit</note>
    </ligand>
</feature>
<dbReference type="EC" id="6.1.1.20" evidence="1"/>
<dbReference type="EMBL" id="AE009951">
    <property type="protein sequence ID" value="AAL94206.1"/>
    <property type="molecule type" value="Genomic_DNA"/>
</dbReference>
<dbReference type="RefSeq" id="NP_602907.1">
    <property type="nucleotide sequence ID" value="NC_003454.1"/>
</dbReference>
<dbReference type="RefSeq" id="WP_011016058.1">
    <property type="nucleotide sequence ID" value="NZ_CP028101.1"/>
</dbReference>
<dbReference type="SMR" id="Q8RHB5"/>
<dbReference type="FunCoup" id="Q8RHB5">
    <property type="interactions" value="368"/>
</dbReference>
<dbReference type="STRING" id="190304.FN2122"/>
<dbReference type="PaxDb" id="190304-FN2122"/>
<dbReference type="EnsemblBacteria" id="AAL94206">
    <property type="protein sequence ID" value="AAL94206"/>
    <property type="gene ID" value="FN2122"/>
</dbReference>
<dbReference type="GeneID" id="79782875"/>
<dbReference type="KEGG" id="fnu:FN2122"/>
<dbReference type="PATRIC" id="fig|190304.8.peg.584"/>
<dbReference type="eggNOG" id="COG0072">
    <property type="taxonomic scope" value="Bacteria"/>
</dbReference>
<dbReference type="eggNOG" id="COG0073">
    <property type="taxonomic scope" value="Bacteria"/>
</dbReference>
<dbReference type="HOGENOM" id="CLU_016891_0_0_0"/>
<dbReference type="InParanoid" id="Q8RHB5"/>
<dbReference type="BioCyc" id="FNUC190304:G1FZS-607-MONOMER"/>
<dbReference type="Proteomes" id="UP000002521">
    <property type="component" value="Chromosome"/>
</dbReference>
<dbReference type="GO" id="GO:0009328">
    <property type="term" value="C:phenylalanine-tRNA ligase complex"/>
    <property type="evidence" value="ECO:0000318"/>
    <property type="project" value="GO_Central"/>
</dbReference>
<dbReference type="GO" id="GO:0005524">
    <property type="term" value="F:ATP binding"/>
    <property type="evidence" value="ECO:0007669"/>
    <property type="project" value="UniProtKB-UniRule"/>
</dbReference>
<dbReference type="GO" id="GO:0000287">
    <property type="term" value="F:magnesium ion binding"/>
    <property type="evidence" value="ECO:0007669"/>
    <property type="project" value="UniProtKB-UniRule"/>
</dbReference>
<dbReference type="GO" id="GO:0004826">
    <property type="term" value="F:phenylalanine-tRNA ligase activity"/>
    <property type="evidence" value="ECO:0007669"/>
    <property type="project" value="UniProtKB-UniRule"/>
</dbReference>
<dbReference type="GO" id="GO:0000049">
    <property type="term" value="F:tRNA binding"/>
    <property type="evidence" value="ECO:0007669"/>
    <property type="project" value="UniProtKB-KW"/>
</dbReference>
<dbReference type="GO" id="GO:0006432">
    <property type="term" value="P:phenylalanyl-tRNA aminoacylation"/>
    <property type="evidence" value="ECO:0000318"/>
    <property type="project" value="GO_Central"/>
</dbReference>
<dbReference type="CDD" id="cd00769">
    <property type="entry name" value="PheRS_beta_core"/>
    <property type="match status" value="1"/>
</dbReference>
<dbReference type="CDD" id="cd02796">
    <property type="entry name" value="tRNA_bind_bactPheRS"/>
    <property type="match status" value="1"/>
</dbReference>
<dbReference type="FunFam" id="2.40.50.140:FF:000045">
    <property type="entry name" value="Phenylalanine--tRNA ligase beta subunit"/>
    <property type="match status" value="1"/>
</dbReference>
<dbReference type="FunFam" id="3.30.70.380:FF:000001">
    <property type="entry name" value="Phenylalanine--tRNA ligase beta subunit"/>
    <property type="match status" value="1"/>
</dbReference>
<dbReference type="FunFam" id="3.30.930.10:FF:000022">
    <property type="entry name" value="Phenylalanine--tRNA ligase beta subunit"/>
    <property type="match status" value="1"/>
</dbReference>
<dbReference type="FunFam" id="3.50.40.10:FF:000001">
    <property type="entry name" value="Phenylalanine--tRNA ligase beta subunit"/>
    <property type="match status" value="1"/>
</dbReference>
<dbReference type="Gene3D" id="3.30.56.10">
    <property type="match status" value="2"/>
</dbReference>
<dbReference type="Gene3D" id="3.30.930.10">
    <property type="entry name" value="Bira Bifunctional Protein, Domain 2"/>
    <property type="match status" value="1"/>
</dbReference>
<dbReference type="Gene3D" id="3.30.70.380">
    <property type="entry name" value="Ferrodoxin-fold anticodon-binding domain"/>
    <property type="match status" value="1"/>
</dbReference>
<dbReference type="Gene3D" id="2.40.50.140">
    <property type="entry name" value="Nucleic acid-binding proteins"/>
    <property type="match status" value="1"/>
</dbReference>
<dbReference type="Gene3D" id="3.50.40.10">
    <property type="entry name" value="Phenylalanyl-trna Synthetase, Chain B, domain 3"/>
    <property type="match status" value="1"/>
</dbReference>
<dbReference type="HAMAP" id="MF_00283">
    <property type="entry name" value="Phe_tRNA_synth_beta1"/>
    <property type="match status" value="1"/>
</dbReference>
<dbReference type="InterPro" id="IPR045864">
    <property type="entry name" value="aa-tRNA-synth_II/BPL/LPL"/>
</dbReference>
<dbReference type="InterPro" id="IPR005146">
    <property type="entry name" value="B3/B4_tRNA-bd"/>
</dbReference>
<dbReference type="InterPro" id="IPR009061">
    <property type="entry name" value="DNA-bd_dom_put_sf"/>
</dbReference>
<dbReference type="InterPro" id="IPR005121">
    <property type="entry name" value="Fdx_antiC-bd"/>
</dbReference>
<dbReference type="InterPro" id="IPR036690">
    <property type="entry name" value="Fdx_antiC-bd_sf"/>
</dbReference>
<dbReference type="InterPro" id="IPR012340">
    <property type="entry name" value="NA-bd_OB-fold"/>
</dbReference>
<dbReference type="InterPro" id="IPR045060">
    <property type="entry name" value="Phe-tRNA-ligase_IIc_bsu"/>
</dbReference>
<dbReference type="InterPro" id="IPR004532">
    <property type="entry name" value="Phe-tRNA-ligase_IIc_bsu_bact"/>
</dbReference>
<dbReference type="InterPro" id="IPR020825">
    <property type="entry name" value="Phe-tRNA_synthase-like_B3/B4"/>
</dbReference>
<dbReference type="InterPro" id="IPR041616">
    <property type="entry name" value="PheRS_beta_core"/>
</dbReference>
<dbReference type="InterPro" id="IPR002547">
    <property type="entry name" value="tRNA-bd_dom"/>
</dbReference>
<dbReference type="InterPro" id="IPR033714">
    <property type="entry name" value="tRNA_bind_bactPheRS"/>
</dbReference>
<dbReference type="InterPro" id="IPR005147">
    <property type="entry name" value="tRNA_synthase_B5-dom"/>
</dbReference>
<dbReference type="NCBIfam" id="TIGR00472">
    <property type="entry name" value="pheT_bact"/>
    <property type="match status" value="1"/>
</dbReference>
<dbReference type="NCBIfam" id="NF045760">
    <property type="entry name" value="YtpR"/>
    <property type="match status" value="1"/>
</dbReference>
<dbReference type="PANTHER" id="PTHR10947:SF0">
    <property type="entry name" value="PHENYLALANINE--TRNA LIGASE BETA SUBUNIT"/>
    <property type="match status" value="1"/>
</dbReference>
<dbReference type="PANTHER" id="PTHR10947">
    <property type="entry name" value="PHENYLALANYL-TRNA SYNTHETASE BETA CHAIN AND LEUCINE-RICH REPEAT-CONTAINING PROTEIN 47"/>
    <property type="match status" value="1"/>
</dbReference>
<dbReference type="Pfam" id="PF03483">
    <property type="entry name" value="B3_4"/>
    <property type="match status" value="1"/>
</dbReference>
<dbReference type="Pfam" id="PF03484">
    <property type="entry name" value="B5"/>
    <property type="match status" value="1"/>
</dbReference>
<dbReference type="Pfam" id="PF03147">
    <property type="entry name" value="FDX-ACB"/>
    <property type="match status" value="1"/>
</dbReference>
<dbReference type="Pfam" id="PF01588">
    <property type="entry name" value="tRNA_bind"/>
    <property type="match status" value="1"/>
</dbReference>
<dbReference type="Pfam" id="PF17759">
    <property type="entry name" value="tRNA_synthFbeta"/>
    <property type="match status" value="1"/>
</dbReference>
<dbReference type="SMART" id="SM00873">
    <property type="entry name" value="B3_4"/>
    <property type="match status" value="1"/>
</dbReference>
<dbReference type="SMART" id="SM00874">
    <property type="entry name" value="B5"/>
    <property type="match status" value="1"/>
</dbReference>
<dbReference type="SMART" id="SM00896">
    <property type="entry name" value="FDX-ACB"/>
    <property type="match status" value="1"/>
</dbReference>
<dbReference type="SUPFAM" id="SSF54991">
    <property type="entry name" value="Anticodon-binding domain of PheRS"/>
    <property type="match status" value="1"/>
</dbReference>
<dbReference type="SUPFAM" id="SSF55681">
    <property type="entry name" value="Class II aaRS and biotin synthetases"/>
    <property type="match status" value="1"/>
</dbReference>
<dbReference type="SUPFAM" id="SSF50249">
    <property type="entry name" value="Nucleic acid-binding proteins"/>
    <property type="match status" value="1"/>
</dbReference>
<dbReference type="SUPFAM" id="SSF56037">
    <property type="entry name" value="PheT/TilS domain"/>
    <property type="match status" value="1"/>
</dbReference>
<dbReference type="SUPFAM" id="SSF46955">
    <property type="entry name" value="Putative DNA-binding domain"/>
    <property type="match status" value="1"/>
</dbReference>
<dbReference type="PROSITE" id="PS51483">
    <property type="entry name" value="B5"/>
    <property type="match status" value="1"/>
</dbReference>
<dbReference type="PROSITE" id="PS51447">
    <property type="entry name" value="FDX_ACB"/>
    <property type="match status" value="1"/>
</dbReference>
<dbReference type="PROSITE" id="PS50886">
    <property type="entry name" value="TRBD"/>
    <property type="match status" value="1"/>
</dbReference>
<protein>
    <recommendedName>
        <fullName evidence="1">Phenylalanine--tRNA ligase beta subunit</fullName>
        <ecNumber evidence="1">6.1.1.20</ecNumber>
    </recommendedName>
    <alternativeName>
        <fullName evidence="1">Phenylalanyl-tRNA synthetase beta subunit</fullName>
        <shortName evidence="1">PheRS</shortName>
    </alternativeName>
</protein>
<name>SYFB_FUSNN</name>
<proteinExistence type="inferred from homology"/>
<organism>
    <name type="scientific">Fusobacterium nucleatum subsp. nucleatum (strain ATCC 25586 / DSM 15643 / BCRC 10681 / CIP 101130 / JCM 8532 / KCTC 2640 / LMG 13131 / VPI 4355)</name>
    <dbReference type="NCBI Taxonomy" id="190304"/>
    <lineage>
        <taxon>Bacteria</taxon>
        <taxon>Fusobacteriati</taxon>
        <taxon>Fusobacteriota</taxon>
        <taxon>Fusobacteriia</taxon>
        <taxon>Fusobacteriales</taxon>
        <taxon>Fusobacteriaceae</taxon>
        <taxon>Fusobacterium</taxon>
    </lineage>
</organism>
<reference key="1">
    <citation type="journal article" date="2002" name="J. Bacteriol.">
        <title>Genome sequence and analysis of the oral bacterium Fusobacterium nucleatum strain ATCC 25586.</title>
        <authorList>
            <person name="Kapatral V."/>
            <person name="Anderson I."/>
            <person name="Ivanova N."/>
            <person name="Reznik G."/>
            <person name="Los T."/>
            <person name="Lykidis A."/>
            <person name="Bhattacharyya A."/>
            <person name="Bartman A."/>
            <person name="Gardner W."/>
            <person name="Grechkin G."/>
            <person name="Zhu L."/>
            <person name="Vasieva O."/>
            <person name="Chu L."/>
            <person name="Kogan Y."/>
            <person name="Chaga O."/>
            <person name="Goltsman E."/>
            <person name="Bernal A."/>
            <person name="Larsen N."/>
            <person name="D'Souza M."/>
            <person name="Walunas T."/>
            <person name="Pusch G."/>
            <person name="Haselkorn R."/>
            <person name="Fonstein M."/>
            <person name="Kyrpides N.C."/>
            <person name="Overbeek R."/>
        </authorList>
    </citation>
    <scope>NUCLEOTIDE SEQUENCE [LARGE SCALE GENOMIC DNA]</scope>
    <source>
        <strain>ATCC 25586 / DSM 15643 / BCRC 10681 / CIP 101130 / JCM 8532 / KCTC 2640 / LMG 13131 / VPI 4355</strain>
    </source>
</reference>
<sequence>MLISLNWLKQYVDIKESIDEIANALTMIGQEVEAIDIQGKDLDNVVIGQIVEFDKHPNSDRLTLLKVNVGGEEPLQIICGAKNHKLNDKVVVAKIGAVLPGNFKIKKSKIRDVESYGMLCSEAELGFTKESEGIIILPEDAPIGTEYREYMNLNDVIFELEITPNRPDCLSHIGIAREVAAYYNRKVKYPMIEITETIESINTMVKVDIEDKDRCKRYMGRVIKNVKVQESPDWLKSRIRAMGLNPINNIVDITNFVMFEYNQPMHAFDLDKLEGNITIRAAKKNEEITTLDGVDRVLKNGELVIADDEKAIAIAGVIGGQNTQIDNETKNIFVEVAYFTPENIRKTSRELGIFTDSAYRNERGMDVENLSNVMARAVSLIAEVAGGDVLSEVIDKYVEKPQRAEISLNLEKLNKFIGKNLTYDEVGKILTHLDIELKPLGEGTMLLIPPSYRADLTRPADIYEEVIRMYGFDNIEAKIPVMSIESGEENINFKMPRIVRGILKELGLNEVINYSFIPKFTKELFNFGDEVIEIKNPLSEDMAIMRPTLLYSLITNIRDNINRNQTDLKLFEISKTFKNLGAEKDGLAIEDLKVGIILSGREDKNLWNQSKTDYNFYDLKGYLEFLLERLNVTKYSLTRLENSNFHPGASAEIKIGEDIIGVFGELHPNLVNYFGIKREKLFFAELNLTKLLKYIKIKVNYESISKYPEVLRDLAITLDRDILVGDMIKEIKKKVALIEKIDIFDVYSGDKIDKDKKSVAMSIILRDKNRTLTDGDIDTAMNTILELIKDKYNGEIRK</sequence>
<accession>Q8RHB5</accession>
<gene>
    <name evidence="1" type="primary">pheT</name>
    <name type="ordered locus">FN2122</name>
</gene>
<comment type="catalytic activity">
    <reaction evidence="1">
        <text>tRNA(Phe) + L-phenylalanine + ATP = L-phenylalanyl-tRNA(Phe) + AMP + diphosphate + H(+)</text>
        <dbReference type="Rhea" id="RHEA:19413"/>
        <dbReference type="Rhea" id="RHEA-COMP:9668"/>
        <dbReference type="Rhea" id="RHEA-COMP:9699"/>
        <dbReference type="ChEBI" id="CHEBI:15378"/>
        <dbReference type="ChEBI" id="CHEBI:30616"/>
        <dbReference type="ChEBI" id="CHEBI:33019"/>
        <dbReference type="ChEBI" id="CHEBI:58095"/>
        <dbReference type="ChEBI" id="CHEBI:78442"/>
        <dbReference type="ChEBI" id="CHEBI:78531"/>
        <dbReference type="ChEBI" id="CHEBI:456215"/>
        <dbReference type="EC" id="6.1.1.20"/>
    </reaction>
</comment>
<comment type="cofactor">
    <cofactor evidence="1">
        <name>Mg(2+)</name>
        <dbReference type="ChEBI" id="CHEBI:18420"/>
    </cofactor>
    <text evidence="1">Binds 2 magnesium ions per tetramer.</text>
</comment>
<comment type="subunit">
    <text evidence="1">Tetramer of two alpha and two beta subunits.</text>
</comment>
<comment type="subcellular location">
    <subcellularLocation>
        <location evidence="1">Cytoplasm</location>
    </subcellularLocation>
</comment>
<comment type="similarity">
    <text evidence="1">Belongs to the phenylalanyl-tRNA synthetase beta subunit family. Type 1 subfamily.</text>
</comment>